<dbReference type="EMBL" id="CP000647">
    <property type="protein sequence ID" value="ABR79115.1"/>
    <property type="molecule type" value="Genomic_DNA"/>
</dbReference>
<dbReference type="RefSeq" id="WP_002920119.1">
    <property type="nucleotide sequence ID" value="NC_009648.1"/>
</dbReference>
<dbReference type="SMR" id="A6TEY1"/>
<dbReference type="STRING" id="272620.KPN_03728"/>
<dbReference type="PaxDb" id="272620-KPN_03728"/>
<dbReference type="EnsemblBacteria" id="ABR79115">
    <property type="protein sequence ID" value="ABR79115"/>
    <property type="gene ID" value="KPN_03728"/>
</dbReference>
<dbReference type="KEGG" id="kpn:KPN_03728"/>
<dbReference type="HOGENOM" id="CLU_166087_2_1_6"/>
<dbReference type="Proteomes" id="UP000000265">
    <property type="component" value="Chromosome"/>
</dbReference>
<dbReference type="GO" id="GO:1990228">
    <property type="term" value="C:sulfurtransferase complex"/>
    <property type="evidence" value="ECO:0007669"/>
    <property type="project" value="TreeGrafter"/>
</dbReference>
<dbReference type="GO" id="GO:0002143">
    <property type="term" value="P:tRNA wobble position uridine thiolation"/>
    <property type="evidence" value="ECO:0007669"/>
    <property type="project" value="InterPro"/>
</dbReference>
<dbReference type="Gene3D" id="3.40.1260.10">
    <property type="entry name" value="DsrEFH-like"/>
    <property type="match status" value="1"/>
</dbReference>
<dbReference type="HAMAP" id="MF_01564">
    <property type="entry name" value="Thiourid_synth_B"/>
    <property type="match status" value="1"/>
</dbReference>
<dbReference type="InterPro" id="IPR027396">
    <property type="entry name" value="DsrEFH-like"/>
</dbReference>
<dbReference type="InterPro" id="IPR023526">
    <property type="entry name" value="Sulphur_relay_TusB"/>
</dbReference>
<dbReference type="InterPro" id="IPR007215">
    <property type="entry name" value="Sulphur_relay_TusB/DsrH"/>
</dbReference>
<dbReference type="NCBIfam" id="NF010035">
    <property type="entry name" value="PRK13510.1"/>
    <property type="match status" value="1"/>
</dbReference>
<dbReference type="NCBIfam" id="TIGR03011">
    <property type="entry name" value="sulf_tusB_dsrH"/>
    <property type="match status" value="1"/>
</dbReference>
<dbReference type="PANTHER" id="PTHR37526">
    <property type="entry name" value="PROTEIN TUSB"/>
    <property type="match status" value="1"/>
</dbReference>
<dbReference type="PANTHER" id="PTHR37526:SF1">
    <property type="entry name" value="PROTEIN TUSB"/>
    <property type="match status" value="1"/>
</dbReference>
<dbReference type="Pfam" id="PF04077">
    <property type="entry name" value="DsrH"/>
    <property type="match status" value="1"/>
</dbReference>
<dbReference type="SUPFAM" id="SSF75169">
    <property type="entry name" value="DsrEFH-like"/>
    <property type="match status" value="1"/>
</dbReference>
<reference key="1">
    <citation type="submission" date="2006-09" db="EMBL/GenBank/DDBJ databases">
        <authorList>
            <consortium name="The Klebsiella pneumonia Genome Sequencing Project"/>
            <person name="McClelland M."/>
            <person name="Sanderson E.K."/>
            <person name="Spieth J."/>
            <person name="Clifton W.S."/>
            <person name="Latreille P."/>
            <person name="Sabo A."/>
            <person name="Pepin K."/>
            <person name="Bhonagiri V."/>
            <person name="Porwollik S."/>
            <person name="Ali J."/>
            <person name="Wilson R.K."/>
        </authorList>
    </citation>
    <scope>NUCLEOTIDE SEQUENCE [LARGE SCALE GENOMIC DNA]</scope>
    <source>
        <strain>ATCC 700721 / MGH 78578</strain>
    </source>
</reference>
<organism>
    <name type="scientific">Klebsiella pneumoniae subsp. pneumoniae (strain ATCC 700721 / MGH 78578)</name>
    <dbReference type="NCBI Taxonomy" id="272620"/>
    <lineage>
        <taxon>Bacteria</taxon>
        <taxon>Pseudomonadati</taxon>
        <taxon>Pseudomonadota</taxon>
        <taxon>Gammaproteobacteria</taxon>
        <taxon>Enterobacterales</taxon>
        <taxon>Enterobacteriaceae</taxon>
        <taxon>Klebsiella/Raoultella group</taxon>
        <taxon>Klebsiella</taxon>
        <taxon>Klebsiella pneumoniae complex</taxon>
    </lineage>
</organism>
<feature type="chain" id="PRO_1000069059" description="Protein TusB">
    <location>
        <begin position="1"/>
        <end position="95"/>
    </location>
</feature>
<accession>A6TEY1</accession>
<protein>
    <recommendedName>
        <fullName evidence="1">Protein TusB</fullName>
    </recommendedName>
    <alternativeName>
        <fullName evidence="1">tRNA 2-thiouridine synthesizing protein B</fullName>
    </alternativeName>
</protein>
<keyword id="KW-0963">Cytoplasm</keyword>
<keyword id="KW-0819">tRNA processing</keyword>
<proteinExistence type="inferred from homology"/>
<comment type="function">
    <text evidence="1">Part of a sulfur-relay system required for 2-thiolation of 5-methylaminomethyl-2-thiouridine (mnm(5)s(2)U) at tRNA wobble positions.</text>
</comment>
<comment type="subunit">
    <text evidence="1">Heterohexamer, formed by a dimer of trimers. The hexameric TusBCD complex contains 2 copies each of TusB, TusC and TusD. The TusBCD complex interacts with TusE.</text>
</comment>
<comment type="subcellular location">
    <subcellularLocation>
        <location evidence="1">Cytoplasm</location>
    </subcellularLocation>
</comment>
<comment type="similarity">
    <text evidence="1">Belongs to the DsrH/TusB family.</text>
</comment>
<sequence length="95" mass="10301">MLHTLSVSPWHADIAAMLRLMEHGDDLVLLSDGVTAAIADGRFLEILQSAPITLYVLQDDVDARGLAGQIADSVGRVSYTDFVRLTVKHAGQLAW</sequence>
<gene>
    <name evidence="1" type="primary">tusB</name>
    <name type="ordered locus">KPN78578_36910</name>
    <name type="ORF">KPN_03728</name>
</gene>
<evidence type="ECO:0000255" key="1">
    <source>
        <dbReference type="HAMAP-Rule" id="MF_01564"/>
    </source>
</evidence>
<name>TUSB_KLEP7</name>